<evidence type="ECO:0000250" key="1">
    <source>
        <dbReference type="UniProtKB" id="D3ZB51"/>
    </source>
</evidence>
<evidence type="ECO:0000255" key="2"/>
<evidence type="ECO:0000255" key="3">
    <source>
        <dbReference type="PROSITE-ProRule" id="PRU00114"/>
    </source>
</evidence>
<evidence type="ECO:0000255" key="4">
    <source>
        <dbReference type="PROSITE-ProRule" id="PRU00316"/>
    </source>
</evidence>
<evidence type="ECO:0000256" key="5">
    <source>
        <dbReference type="SAM" id="MobiDB-lite"/>
    </source>
</evidence>
<evidence type="ECO:0000269" key="6">
    <source>
    </source>
</evidence>
<evidence type="ECO:0000305" key="7"/>
<evidence type="ECO:0000312" key="8">
    <source>
        <dbReference type="EMBL" id="BAD90425.1"/>
    </source>
</evidence>
<evidence type="ECO:0000312" key="9">
    <source>
        <dbReference type="MGI" id="MGI:2685354"/>
    </source>
</evidence>
<evidence type="ECO:0000312" key="10">
    <source>
        <dbReference type="Proteomes" id="UP000000589"/>
    </source>
</evidence>
<evidence type="ECO:0007744" key="11">
    <source>
    </source>
</evidence>
<evidence type="ECO:0007744" key="12">
    <source>
    </source>
</evidence>
<organism evidence="10">
    <name type="scientific">Mus musculus</name>
    <name type="common">Mouse</name>
    <dbReference type="NCBI Taxonomy" id="10090"/>
    <lineage>
        <taxon>Eukaryota</taxon>
        <taxon>Metazoa</taxon>
        <taxon>Chordata</taxon>
        <taxon>Craniata</taxon>
        <taxon>Vertebrata</taxon>
        <taxon>Euteleostomi</taxon>
        <taxon>Mammalia</taxon>
        <taxon>Eutheria</taxon>
        <taxon>Euarchontoglires</taxon>
        <taxon>Glires</taxon>
        <taxon>Rodentia</taxon>
        <taxon>Myomorpha</taxon>
        <taxon>Muroidea</taxon>
        <taxon>Muridae</taxon>
        <taxon>Murinae</taxon>
        <taxon>Mus</taxon>
        <taxon>Mus</taxon>
    </lineage>
</organism>
<name>TUTLB_MOUSE</name>
<protein>
    <recommendedName>
        <fullName>Protein turtle homolog B</fullName>
    </recommendedName>
    <alternativeName>
        <fullName evidence="9">Immunoglobulin superfamily member 9B</fullName>
    </alternativeName>
</protein>
<dbReference type="EMBL" id="AC117198">
    <property type="status" value="NOT_ANNOTATED_CDS"/>
    <property type="molecule type" value="Genomic_DNA"/>
</dbReference>
<dbReference type="EMBL" id="AC154374">
    <property type="status" value="NOT_ANNOTATED_CDS"/>
    <property type="molecule type" value="Genomic_DNA"/>
</dbReference>
<dbReference type="EMBL" id="AK220364">
    <property type="protein sequence ID" value="BAD90425.1"/>
    <property type="molecule type" value="mRNA"/>
</dbReference>
<dbReference type="RefSeq" id="NP_001123259.1">
    <property type="nucleotide sequence ID" value="NM_001129787.1"/>
</dbReference>
<dbReference type="SMR" id="E9PZ19"/>
<dbReference type="FunCoup" id="E9PZ19">
    <property type="interactions" value="53"/>
</dbReference>
<dbReference type="IntAct" id="E9PZ19">
    <property type="interactions" value="2"/>
</dbReference>
<dbReference type="MINT" id="E9PZ19"/>
<dbReference type="STRING" id="10090.ENSMUSP00000117017"/>
<dbReference type="GlyCosmos" id="E9PZ19">
    <property type="glycosylation" value="3 sites, No reported glycans"/>
</dbReference>
<dbReference type="GlyGen" id="E9PZ19">
    <property type="glycosylation" value="7 sites, 2 N-linked glycans (2 sites), 1 O-linked glycan (2 sites)"/>
</dbReference>
<dbReference type="iPTMnet" id="E9PZ19"/>
<dbReference type="PhosphoSitePlus" id="E9PZ19"/>
<dbReference type="PaxDb" id="10090-ENSMUSP00000117017"/>
<dbReference type="ProteomicsDB" id="298388"/>
<dbReference type="Antibodypedia" id="2253">
    <property type="antibodies" value="24 antibodies from 11 providers"/>
</dbReference>
<dbReference type="UCSC" id="uc009oqm.2">
    <property type="organism name" value="mouse"/>
</dbReference>
<dbReference type="AGR" id="MGI:2685354"/>
<dbReference type="MGI" id="MGI:2685354">
    <property type="gene designation" value="Igsf9b"/>
</dbReference>
<dbReference type="VEuPathDB" id="HostDB:ENSMUSG00000034275"/>
<dbReference type="eggNOG" id="KOG2408">
    <property type="taxonomic scope" value="Eukaryota"/>
</dbReference>
<dbReference type="eggNOG" id="KOG3510">
    <property type="taxonomic scope" value="Eukaryota"/>
</dbReference>
<dbReference type="HOGENOM" id="CLU_008169_0_0_1"/>
<dbReference type="InParanoid" id="E9PZ19"/>
<dbReference type="PhylomeDB" id="E9PZ19"/>
<dbReference type="TreeFam" id="TF326128"/>
<dbReference type="BioGRID-ORCS" id="235086">
    <property type="hits" value="1 hit in 77 CRISPR screens"/>
</dbReference>
<dbReference type="CD-CODE" id="CE726F99">
    <property type="entry name" value="Postsynaptic density"/>
</dbReference>
<dbReference type="PRO" id="PR:E9PZ19"/>
<dbReference type="Proteomes" id="UP000000589">
    <property type="component" value="Chromosome 9"/>
</dbReference>
<dbReference type="RNAct" id="E9PZ19">
    <property type="molecule type" value="protein"/>
</dbReference>
<dbReference type="Bgee" id="ENSMUSG00000034275">
    <property type="expression patterns" value="Expressed in cerebellum lobe and 134 other cell types or tissues"/>
</dbReference>
<dbReference type="ExpressionAtlas" id="E9PZ19">
    <property type="expression patterns" value="baseline and differential"/>
</dbReference>
<dbReference type="GO" id="GO:0030425">
    <property type="term" value="C:dendrite"/>
    <property type="evidence" value="ECO:0000314"/>
    <property type="project" value="MGI"/>
</dbReference>
<dbReference type="GO" id="GO:0098982">
    <property type="term" value="C:GABA-ergic synapse"/>
    <property type="evidence" value="ECO:0000314"/>
    <property type="project" value="SynGO"/>
</dbReference>
<dbReference type="GO" id="GO:0060077">
    <property type="term" value="C:inhibitory synapse"/>
    <property type="evidence" value="ECO:0000314"/>
    <property type="project" value="MGI"/>
</dbReference>
<dbReference type="GO" id="GO:0043025">
    <property type="term" value="C:neuronal cell body"/>
    <property type="evidence" value="ECO:0000314"/>
    <property type="project" value="MGI"/>
</dbReference>
<dbReference type="GO" id="GO:0014069">
    <property type="term" value="C:postsynaptic density"/>
    <property type="evidence" value="ECO:0007669"/>
    <property type="project" value="UniProtKB-SubCell"/>
</dbReference>
<dbReference type="GO" id="GO:0045211">
    <property type="term" value="C:postsynaptic membrane"/>
    <property type="evidence" value="ECO:0007669"/>
    <property type="project" value="UniProtKB-SubCell"/>
</dbReference>
<dbReference type="GO" id="GO:0019900">
    <property type="term" value="F:kinase binding"/>
    <property type="evidence" value="ECO:0000314"/>
    <property type="project" value="MGI"/>
</dbReference>
<dbReference type="GO" id="GO:0007156">
    <property type="term" value="P:homophilic cell adhesion via plasma membrane adhesion molecules"/>
    <property type="evidence" value="ECO:0000314"/>
    <property type="project" value="MGI"/>
</dbReference>
<dbReference type="GO" id="GO:0007399">
    <property type="term" value="P:nervous system development"/>
    <property type="evidence" value="ECO:0007669"/>
    <property type="project" value="UniProtKB-KW"/>
</dbReference>
<dbReference type="GO" id="GO:0097151">
    <property type="term" value="P:positive regulation of inhibitory postsynaptic potential"/>
    <property type="evidence" value="ECO:0000315"/>
    <property type="project" value="MGI"/>
</dbReference>
<dbReference type="GO" id="GO:0099560">
    <property type="term" value="P:synaptic membrane adhesion"/>
    <property type="evidence" value="ECO:0000314"/>
    <property type="project" value="SynGO"/>
</dbReference>
<dbReference type="CDD" id="cd00063">
    <property type="entry name" value="FN3"/>
    <property type="match status" value="2"/>
</dbReference>
<dbReference type="CDD" id="cd00096">
    <property type="entry name" value="Ig"/>
    <property type="match status" value="2"/>
</dbReference>
<dbReference type="FunFam" id="2.60.40.10:FF:000272">
    <property type="entry name" value="Immunoglobulin superfamily member 9B"/>
    <property type="match status" value="1"/>
</dbReference>
<dbReference type="FunFam" id="2.60.40.10:FF:000323">
    <property type="entry name" value="Immunoglobulin superfamily member 9B"/>
    <property type="match status" value="1"/>
</dbReference>
<dbReference type="FunFam" id="2.60.40.10:FF:000389">
    <property type="entry name" value="Immunoglobulin superfamily member 9B"/>
    <property type="match status" value="1"/>
</dbReference>
<dbReference type="FunFam" id="2.60.40.10:FF:000531">
    <property type="entry name" value="Immunoglobulin superfamily member 9B"/>
    <property type="match status" value="1"/>
</dbReference>
<dbReference type="FunFam" id="2.60.40.10:FF:000226">
    <property type="entry name" value="protein turtle homolog B"/>
    <property type="match status" value="1"/>
</dbReference>
<dbReference type="FunFam" id="2.60.40.10:FF:000245">
    <property type="entry name" value="protein turtle homolog B isoform X2"/>
    <property type="match status" value="1"/>
</dbReference>
<dbReference type="FunFam" id="2.60.40.10:FF:000321">
    <property type="entry name" value="protein turtle homolog B isoform X2"/>
    <property type="match status" value="1"/>
</dbReference>
<dbReference type="Gene3D" id="2.60.40.10">
    <property type="entry name" value="Immunoglobulins"/>
    <property type="match status" value="7"/>
</dbReference>
<dbReference type="InterPro" id="IPR003961">
    <property type="entry name" value="FN3_dom"/>
</dbReference>
<dbReference type="InterPro" id="IPR036116">
    <property type="entry name" value="FN3_sf"/>
</dbReference>
<dbReference type="InterPro" id="IPR007110">
    <property type="entry name" value="Ig-like_dom"/>
</dbReference>
<dbReference type="InterPro" id="IPR036179">
    <property type="entry name" value="Ig-like_dom_sf"/>
</dbReference>
<dbReference type="InterPro" id="IPR013783">
    <property type="entry name" value="Ig-like_fold"/>
</dbReference>
<dbReference type="InterPro" id="IPR003599">
    <property type="entry name" value="Ig_sub"/>
</dbReference>
<dbReference type="InterPro" id="IPR003598">
    <property type="entry name" value="Ig_sub2"/>
</dbReference>
<dbReference type="InterPro" id="IPR051170">
    <property type="entry name" value="Neural/epithelial_adhesion"/>
</dbReference>
<dbReference type="PANTHER" id="PTHR12231">
    <property type="entry name" value="CTX-RELATED TYPE I TRANSMEMBRANE PROTEIN"/>
    <property type="match status" value="1"/>
</dbReference>
<dbReference type="PANTHER" id="PTHR12231:SF240">
    <property type="entry name" value="PROTEIN TURTLE HOMOLOG B"/>
    <property type="match status" value="1"/>
</dbReference>
<dbReference type="Pfam" id="PF00041">
    <property type="entry name" value="fn3"/>
    <property type="match status" value="2"/>
</dbReference>
<dbReference type="Pfam" id="PF13895">
    <property type="entry name" value="Ig_2"/>
    <property type="match status" value="1"/>
</dbReference>
<dbReference type="Pfam" id="PF13927">
    <property type="entry name" value="Ig_3"/>
    <property type="match status" value="3"/>
</dbReference>
<dbReference type="SMART" id="SM00060">
    <property type="entry name" value="FN3"/>
    <property type="match status" value="3"/>
</dbReference>
<dbReference type="SMART" id="SM00409">
    <property type="entry name" value="IG"/>
    <property type="match status" value="5"/>
</dbReference>
<dbReference type="SMART" id="SM00408">
    <property type="entry name" value="IGc2"/>
    <property type="match status" value="5"/>
</dbReference>
<dbReference type="SUPFAM" id="SSF49265">
    <property type="entry name" value="Fibronectin type III"/>
    <property type="match status" value="1"/>
</dbReference>
<dbReference type="SUPFAM" id="SSF48726">
    <property type="entry name" value="Immunoglobulin"/>
    <property type="match status" value="5"/>
</dbReference>
<dbReference type="PROSITE" id="PS50853">
    <property type="entry name" value="FN3"/>
    <property type="match status" value="2"/>
</dbReference>
<dbReference type="PROSITE" id="PS50835">
    <property type="entry name" value="IG_LIKE"/>
    <property type="match status" value="5"/>
</dbReference>
<keyword id="KW-0130">Cell adhesion</keyword>
<keyword id="KW-1003">Cell membrane</keyword>
<keyword id="KW-1015">Disulfide bond</keyword>
<keyword id="KW-0325">Glycoprotein</keyword>
<keyword id="KW-0393">Immunoglobulin domain</keyword>
<keyword id="KW-0472">Membrane</keyword>
<keyword id="KW-0488">Methylation</keyword>
<keyword id="KW-0524">Neurogenesis</keyword>
<keyword id="KW-0597">Phosphoprotein</keyword>
<keyword id="KW-0628">Postsynaptic cell membrane</keyword>
<keyword id="KW-1185">Reference proteome</keyword>
<keyword id="KW-0677">Repeat</keyword>
<keyword id="KW-0732">Signal</keyword>
<keyword id="KW-0770">Synapse</keyword>
<keyword id="KW-0812">Transmembrane</keyword>
<keyword id="KW-1133">Transmembrane helix</keyword>
<accession>E9PZ19</accession>
<accession>Q5DU06</accession>
<gene>
    <name evidence="9" type="primary">Igsf9b</name>
    <name type="synonym">Kiaa1030</name>
</gene>
<comment type="function">
    <text evidence="1 6">Transmembrane protein which is abundantly expressed in interneurons, where it may regulate inhibitory synapse development (By similarity). May mediate homophilic cell adhesion (PubMed:23751499).</text>
</comment>
<comment type="subunit">
    <text evidence="6">Found in a complex with MAGI2 and NLGN2, where it interacts with MAGI2 (via PDZ 5 and PDZ 6 domains).</text>
</comment>
<comment type="subcellular location">
    <subcellularLocation>
        <location evidence="6">Cell membrane</location>
        <topology evidence="2">Single-pass type I membrane protein</topology>
    </subcellularLocation>
    <subcellularLocation>
        <location evidence="1">Postsynaptic cell membrane</location>
        <topology evidence="2">Single-pass type I membrane protein</topology>
    </subcellularLocation>
    <subcellularLocation>
        <location evidence="1">Postsynaptic density</location>
    </subcellularLocation>
</comment>
<comment type="tissue specificity">
    <text evidence="6">Detected in brain.</text>
</comment>
<comment type="PTM">
    <text evidence="1">N-glycosylated and sialylated. Not significantly O-glycosylated.</text>
</comment>
<comment type="similarity">
    <text evidence="7">Belongs to the immunoglobulin superfamily. Turtle family.</text>
</comment>
<proteinExistence type="evidence at protein level"/>
<sequence>MIWYVATLIASVISTRGLVAQGAHGLREEPEFVTARAGEGVVLRCDVIHPVTGQPPPYVVEWFKFGVPIPIFIKFGYYPPHVDPEYAGRASLHDKASLRLEQVRSEDQGWYECKVLMLDQQYDTFHNGSWVHLTINAPPTFTETPPQYIEAKEGGSITMTCTAFGNPKPIVTWLKEGTLLGASAKYQVSDGSLTVTSVSREDRGAYTCRAYSIQGEAVHTTHLLVQGPPFIVSPPENITVNISQDALLTCRAEAYPGNLTYTWYWQDENVYFQNDLKLRVRILIDGTLIIFRVKPEDAGKYTCVPSNSLGRSPSASAYLTVQYPARVLNMPPVIYVPVGIHGYIRCPVDAEPPATVVKWNKDGRPLQVEKNLGWTLMEDGSIRIEEATEEALGTYTCVPYNTLGTMGQSAPARLVLKDPPYFTVLPGWEYRQEAGRELLIPCAAAGDPFPVITWRKVGKPSRSKHNALPSGSLQFRALSKEDHGEWECVATNVVTSITASTHLTVIGTSPHAPGSVRVHVSMTTANVSWEPGYDGGYEQTFSVWMKRAQFGPHDWLSLSVPPGPSWLLVDSLEPETAYQFSVLAQNRLGTSAFSEVVTVNTLAFPVTTPEPLVLVTPPRCLTANRTQQGVLLSWLPPANHSFPIDRYIMEFRVGERWEMLDDAIPGTDGDFFAKDLSQDTWYEFRVLAVMQDLISEPSNIAGVSSTDIFPQPDLTDDGLARPVLAGIVATICFLAAAILFSTLAACFVNKQRKRKLKRKKDPPLSITHCRKSLESPLSSGKVSPESIRTLRAPSESSDDQGQPAAKRMLSPTREKELSLYKKTKRAISSRKYSVAKAEAEAEATTPIELISRGPDGRFVMGPSEMEPSVKGRRIEGFPFAEETDMYPEFRQSDEENEDPLVPTSVAALKPQLTPMSSSQDSYLPPPAYSPRFQPRGLEGPSGLGGRLQATGQARPPAPRPFQHGQYYGYLSSSSPGEVEPPPFYMPEVGSPLSSVMSSPPLHTEGPFGHPTIPEENGENASNSTLPLTQTPTGGRSPEPWGRPEFPFGGLETPAMMFPHQLHPCDVAESLQPKACLPRGLPPAPLQVPAAYPGMLSLEAPKGWVGKSPGRGPIPAPPATKWQERPMQPLVSQGQLRHTSQGMGIPVLPYPEPAEPGGHGGPSTFGLDTRWYEPQPRPRPSPRQARRAEPSLHQVVLQPSRLSPLTQSPLSSRTGSPELAARARPRPGLLQQAEMSEITLQPPAAVSFSRKSTPSSTGSPSQSSRSGSPSYRPTMGFTTLATGYPSPPPGPAPPAPGDTLDVFGQTPSPRRMGEEPLRPEPPTTLPTSG</sequence>
<reference evidence="10" key="1">
    <citation type="journal article" date="2009" name="PLoS Biol.">
        <title>Lineage-specific biology revealed by a finished genome assembly of the mouse.</title>
        <authorList>
            <person name="Church D.M."/>
            <person name="Goodstadt L."/>
            <person name="Hillier L.W."/>
            <person name="Zody M.C."/>
            <person name="Goldstein S."/>
            <person name="She X."/>
            <person name="Bult C.J."/>
            <person name="Agarwala R."/>
            <person name="Cherry J.L."/>
            <person name="DiCuccio M."/>
            <person name="Hlavina W."/>
            <person name="Kapustin Y."/>
            <person name="Meric P."/>
            <person name="Maglott D."/>
            <person name="Birtle Z."/>
            <person name="Marques A.C."/>
            <person name="Graves T."/>
            <person name="Zhou S."/>
            <person name="Teague B."/>
            <person name="Potamousis K."/>
            <person name="Churas C."/>
            <person name="Place M."/>
            <person name="Herschleb J."/>
            <person name="Runnheim R."/>
            <person name="Forrest D."/>
            <person name="Amos-Landgraf J."/>
            <person name="Schwartz D.C."/>
            <person name="Cheng Z."/>
            <person name="Lindblad-Toh K."/>
            <person name="Eichler E.E."/>
            <person name="Ponting C.P."/>
        </authorList>
    </citation>
    <scope>NUCLEOTIDE SEQUENCE [LARGE SCALE GENOMIC DNA]</scope>
    <source>
        <strain evidence="10">C57BL/6J</strain>
    </source>
</reference>
<reference evidence="8" key="2">
    <citation type="submission" date="2005-02" db="EMBL/GenBank/DDBJ databases">
        <title>Prediction of the coding sequences of mouse homologues of KIAA gene. The complete nucleotide sequences of mouse KIAA-homologous cDNAs identified by screening of terminal sequences of cDNA clones randomly sampled from size-fractionated libraries.</title>
        <authorList>
            <person name="Okazaki N."/>
            <person name="Kikuno R.F."/>
            <person name="Ohara R."/>
            <person name="Inamoto S."/>
            <person name="Nagase T."/>
            <person name="Ohara O."/>
            <person name="Koga H."/>
        </authorList>
    </citation>
    <scope>NUCLEOTIDE SEQUENCE [LARGE SCALE MRNA] OF 576-1328</scope>
    <source>
        <tissue evidence="8">Brain</tissue>
    </source>
</reference>
<reference key="3">
    <citation type="journal article" date="2006" name="Mol. Cell. Proteomics">
        <title>Comprehensive identification of phosphorylation sites in postsynaptic density preparations.</title>
        <authorList>
            <person name="Trinidad J.C."/>
            <person name="Specht C.G."/>
            <person name="Thalhammer A."/>
            <person name="Schoepfer R."/>
            <person name="Burlingame A.L."/>
        </authorList>
    </citation>
    <scope>IDENTIFICATION BY MASS SPECTROMETRY [LARGE SCALE ANALYSIS]</scope>
    <source>
        <tissue>Brain</tissue>
    </source>
</reference>
<reference key="4">
    <citation type="journal article" date="2010" name="Cell">
        <title>A tissue-specific atlas of mouse protein phosphorylation and expression.</title>
        <authorList>
            <person name="Huttlin E.L."/>
            <person name="Jedrychowski M.P."/>
            <person name="Elias J.E."/>
            <person name="Goswami T."/>
            <person name="Rad R."/>
            <person name="Beausoleil S.A."/>
            <person name="Villen J."/>
            <person name="Haas W."/>
            <person name="Sowa M.E."/>
            <person name="Gygi S.P."/>
        </authorList>
    </citation>
    <scope>PHOSPHORYLATION [LARGE SCALE ANALYSIS] AT SER-783; SER-794 AND SER-1215</scope>
    <scope>IDENTIFICATION BY MASS SPECTROMETRY [LARGE SCALE ANALYSIS]</scope>
    <source>
        <tissue>Brain</tissue>
    </source>
</reference>
<reference evidence="7" key="5">
    <citation type="journal article" date="2013" name="J. Cell Biol.">
        <title>The adhesion protein IgSF9b is coupled to neuroligin 2 via S-SCAM to promote inhibitory synapse development.</title>
        <authorList>
            <person name="Woo J."/>
            <person name="Kwon S.K."/>
            <person name="Nam J."/>
            <person name="Choi S."/>
            <person name="Takahashi H."/>
            <person name="Krueger D."/>
            <person name="Park J."/>
            <person name="Lee Y."/>
            <person name="Bae J.Y."/>
            <person name="Lee D."/>
            <person name="Ko J."/>
            <person name="Kim H."/>
            <person name="Kim M.H."/>
            <person name="Bae Y.C."/>
            <person name="Chang S."/>
            <person name="Craig A.M."/>
            <person name="Kim E."/>
        </authorList>
    </citation>
    <scope>FUNCTION</scope>
    <scope>IDENTIFICATION IN A COMPLEX WITH MAGI2 AND NLGN2</scope>
    <scope>SUBCELLULAR LOCATION</scope>
    <scope>TISSUE SPECIFICITY</scope>
</reference>
<reference key="6">
    <citation type="journal article" date="2014" name="Mol. Cell. Proteomics">
        <title>Immunoaffinity enrichment and mass spectrometry analysis of protein methylation.</title>
        <authorList>
            <person name="Guo A."/>
            <person name="Gu H."/>
            <person name="Zhou J."/>
            <person name="Mulhern D."/>
            <person name="Wang Y."/>
            <person name="Lee K.A."/>
            <person name="Yang V."/>
            <person name="Aguiar M."/>
            <person name="Kornhauser J."/>
            <person name="Jia X."/>
            <person name="Ren J."/>
            <person name="Beausoleil S.A."/>
            <person name="Silva J.C."/>
            <person name="Vemulapalli V."/>
            <person name="Bedford M.T."/>
            <person name="Comb M.J."/>
        </authorList>
    </citation>
    <scope>METHYLATION [LARGE SCALE ANALYSIS] AT ARG-1136</scope>
    <scope>IDENTIFICATION BY MASS SPECTROMETRY [LARGE SCALE ANALYSIS]</scope>
    <source>
        <tissue>Brain</tissue>
    </source>
</reference>
<feature type="signal peptide" evidence="2">
    <location>
        <begin position="1"/>
        <end position="17"/>
    </location>
</feature>
<feature type="chain" id="PRO_5003245544" description="Protein turtle homolog B">
    <location>
        <begin position="18"/>
        <end position="1328"/>
    </location>
</feature>
<feature type="topological domain" description="Extracellular" evidence="7">
    <location>
        <begin position="18"/>
        <end position="722"/>
    </location>
</feature>
<feature type="transmembrane region" description="Helical" evidence="2">
    <location>
        <begin position="723"/>
        <end position="743"/>
    </location>
</feature>
<feature type="topological domain" description="Cytoplasmic" evidence="7">
    <location>
        <begin position="744"/>
        <end position="1328"/>
    </location>
</feature>
<feature type="domain" description="Ig-like 1" evidence="3">
    <location>
        <begin position="30"/>
        <end position="115"/>
    </location>
</feature>
<feature type="domain" description="Ig-like 2" evidence="3">
    <location>
        <begin position="139"/>
        <end position="226"/>
    </location>
</feature>
<feature type="domain" description="Ig-like 3" evidence="3">
    <location>
        <begin position="228"/>
        <end position="320"/>
    </location>
</feature>
<feature type="domain" description="Ig-like 4" evidence="3">
    <location>
        <begin position="324"/>
        <end position="415"/>
    </location>
</feature>
<feature type="domain" description="Ig-like 5" evidence="3">
    <location>
        <begin position="420"/>
        <end position="504"/>
    </location>
</feature>
<feature type="domain" description="Fibronectin type-III 1" evidence="4">
    <location>
        <begin position="512"/>
        <end position="604"/>
    </location>
</feature>
<feature type="domain" description="Fibronectin type-III 2" evidence="4">
    <location>
        <begin position="614"/>
        <end position="708"/>
    </location>
</feature>
<feature type="region of interest" description="Disordered" evidence="5">
    <location>
        <begin position="758"/>
        <end position="817"/>
    </location>
</feature>
<feature type="region of interest" description="Disordered" evidence="5">
    <location>
        <begin position="914"/>
        <end position="1040"/>
    </location>
</feature>
<feature type="region of interest" description="Disordered" evidence="5">
    <location>
        <begin position="1106"/>
        <end position="1328"/>
    </location>
</feature>
<feature type="compositionally biased region" description="Low complexity" evidence="5">
    <location>
        <begin position="990"/>
        <end position="1001"/>
    </location>
</feature>
<feature type="compositionally biased region" description="Polar residues" evidence="5">
    <location>
        <begin position="1018"/>
        <end position="1033"/>
    </location>
</feature>
<feature type="compositionally biased region" description="Polar residues" evidence="5">
    <location>
        <begin position="1129"/>
        <end position="1141"/>
    </location>
</feature>
<feature type="compositionally biased region" description="Polar residues" evidence="5">
    <location>
        <begin position="1199"/>
        <end position="1214"/>
    </location>
</feature>
<feature type="compositionally biased region" description="Low complexity" evidence="5">
    <location>
        <begin position="1246"/>
        <end position="1273"/>
    </location>
</feature>
<feature type="compositionally biased region" description="Pro residues" evidence="5">
    <location>
        <begin position="1284"/>
        <end position="1295"/>
    </location>
</feature>
<feature type="compositionally biased region" description="Pro residues" evidence="5">
    <location>
        <begin position="1318"/>
        <end position="1328"/>
    </location>
</feature>
<feature type="modified residue" description="Phosphoserine" evidence="1">
    <location>
        <position position="775"/>
    </location>
</feature>
<feature type="modified residue" description="Phosphoserine" evidence="11">
    <location>
        <position position="783"/>
    </location>
</feature>
<feature type="modified residue" description="Phosphoserine" evidence="11">
    <location>
        <position position="794"/>
    </location>
</feature>
<feature type="modified residue" description="Omega-N-methylarginine" evidence="12">
    <location>
        <position position="1136"/>
    </location>
</feature>
<feature type="modified residue" description="Phosphoserine" evidence="1">
    <location>
        <position position="1207"/>
    </location>
</feature>
<feature type="modified residue" description="Phosphoserine" evidence="11">
    <location>
        <position position="1215"/>
    </location>
</feature>
<feature type="glycosylation site" description="N-linked (GlcNAc...) asparagine" evidence="2">
    <location>
        <position position="241"/>
    </location>
</feature>
<feature type="glycosylation site" description="N-linked (GlcNAc...) asparagine" evidence="2">
    <location>
        <position position="258"/>
    </location>
</feature>
<feature type="glycosylation site" description="N-linked (GlcNAc...) asparagine" evidence="2">
    <location>
        <position position="624"/>
    </location>
</feature>
<feature type="disulfide bond" evidence="3">
    <location>
        <begin position="45"/>
        <end position="113"/>
    </location>
</feature>
<feature type="disulfide bond" evidence="3">
    <location>
        <begin position="161"/>
        <end position="208"/>
    </location>
</feature>
<feature type="disulfide bond" evidence="3">
    <location>
        <begin position="250"/>
        <end position="303"/>
    </location>
</feature>
<feature type="disulfide bond" evidence="3">
    <location>
        <begin position="346"/>
        <end position="397"/>
    </location>
</feature>
<feature type="disulfide bond" evidence="3">
    <location>
        <begin position="442"/>
        <end position="488"/>
    </location>
</feature>